<proteinExistence type="inferred from homology"/>
<reference key="1">
    <citation type="journal article" date="2009" name="PLoS Pathog.">
        <title>Genomic evidence for the evolution of Streptococcus equi: host restriction, increased virulence, and genetic exchange with human pathogens.</title>
        <authorList>
            <person name="Holden M.T.G."/>
            <person name="Heather Z."/>
            <person name="Paillot R."/>
            <person name="Steward K.F."/>
            <person name="Webb K."/>
            <person name="Ainslie F."/>
            <person name="Jourdan T."/>
            <person name="Bason N.C."/>
            <person name="Holroyd N.E."/>
            <person name="Mungall K."/>
            <person name="Quail M.A."/>
            <person name="Sanders M."/>
            <person name="Simmonds M."/>
            <person name="Willey D."/>
            <person name="Brooks K."/>
            <person name="Aanensen D.M."/>
            <person name="Spratt B.G."/>
            <person name="Jolley K.A."/>
            <person name="Maiden M.C.J."/>
            <person name="Kehoe M."/>
            <person name="Chanter N."/>
            <person name="Bentley S.D."/>
            <person name="Robinson C."/>
            <person name="Maskell D.J."/>
            <person name="Parkhill J."/>
            <person name="Waller A.S."/>
        </authorList>
    </citation>
    <scope>NUCLEOTIDE SEQUENCE [LARGE SCALE GENOMIC DNA]</scope>
    <source>
        <strain>H70</strain>
    </source>
</reference>
<evidence type="ECO:0000255" key="1">
    <source>
        <dbReference type="HAMAP-Rule" id="MF_00532"/>
    </source>
</evidence>
<evidence type="ECO:0000305" key="2"/>
<protein>
    <recommendedName>
        <fullName evidence="1">Small ribosomal subunit protein uS9</fullName>
    </recommendedName>
    <alternativeName>
        <fullName evidence="2">30S ribosomal protein S9</fullName>
    </alternativeName>
</protein>
<sequence>MAQAQYAGTGRRKNAVARVRLVPGTGKITVNKKDVEEYIPHADLRLIINQPFAVTSTEGSYDVFVNVVGGGYAGQSGAIRHGIARALLQVDPDFRDSLKRAGLLTRDARMVERKKPGLKKARKASQFSKR</sequence>
<comment type="similarity">
    <text evidence="1">Belongs to the universal ribosomal protein uS9 family.</text>
</comment>
<gene>
    <name evidence="1" type="primary">rpsI</name>
    <name type="ordered locus">SZO_02220</name>
</gene>
<dbReference type="EMBL" id="FM204884">
    <property type="protein sequence ID" value="CAW97961.1"/>
    <property type="molecule type" value="Genomic_DNA"/>
</dbReference>
<dbReference type="SMR" id="C0MFN0"/>
<dbReference type="KEGG" id="seq:SZO_02220"/>
<dbReference type="eggNOG" id="COG0103">
    <property type="taxonomic scope" value="Bacteria"/>
</dbReference>
<dbReference type="HOGENOM" id="CLU_046483_2_1_9"/>
<dbReference type="Proteomes" id="UP000001368">
    <property type="component" value="Chromosome"/>
</dbReference>
<dbReference type="GO" id="GO:0022627">
    <property type="term" value="C:cytosolic small ribosomal subunit"/>
    <property type="evidence" value="ECO:0007669"/>
    <property type="project" value="TreeGrafter"/>
</dbReference>
<dbReference type="GO" id="GO:0003723">
    <property type="term" value="F:RNA binding"/>
    <property type="evidence" value="ECO:0007669"/>
    <property type="project" value="TreeGrafter"/>
</dbReference>
<dbReference type="GO" id="GO:0003735">
    <property type="term" value="F:structural constituent of ribosome"/>
    <property type="evidence" value="ECO:0007669"/>
    <property type="project" value="InterPro"/>
</dbReference>
<dbReference type="GO" id="GO:0006412">
    <property type="term" value="P:translation"/>
    <property type="evidence" value="ECO:0007669"/>
    <property type="project" value="UniProtKB-UniRule"/>
</dbReference>
<dbReference type="FunFam" id="3.30.230.10:FF:000001">
    <property type="entry name" value="30S ribosomal protein S9"/>
    <property type="match status" value="1"/>
</dbReference>
<dbReference type="Gene3D" id="3.30.230.10">
    <property type="match status" value="1"/>
</dbReference>
<dbReference type="HAMAP" id="MF_00532_B">
    <property type="entry name" value="Ribosomal_uS9_B"/>
    <property type="match status" value="1"/>
</dbReference>
<dbReference type="InterPro" id="IPR020568">
    <property type="entry name" value="Ribosomal_Su5_D2-typ_SF"/>
</dbReference>
<dbReference type="InterPro" id="IPR000754">
    <property type="entry name" value="Ribosomal_uS9"/>
</dbReference>
<dbReference type="InterPro" id="IPR023035">
    <property type="entry name" value="Ribosomal_uS9_bac/plastid"/>
</dbReference>
<dbReference type="InterPro" id="IPR020574">
    <property type="entry name" value="Ribosomal_uS9_CS"/>
</dbReference>
<dbReference type="InterPro" id="IPR014721">
    <property type="entry name" value="Ribsml_uS5_D2-typ_fold_subgr"/>
</dbReference>
<dbReference type="NCBIfam" id="NF001099">
    <property type="entry name" value="PRK00132.1"/>
    <property type="match status" value="1"/>
</dbReference>
<dbReference type="PANTHER" id="PTHR21569">
    <property type="entry name" value="RIBOSOMAL PROTEIN S9"/>
    <property type="match status" value="1"/>
</dbReference>
<dbReference type="PANTHER" id="PTHR21569:SF1">
    <property type="entry name" value="SMALL RIBOSOMAL SUBUNIT PROTEIN US9M"/>
    <property type="match status" value="1"/>
</dbReference>
<dbReference type="Pfam" id="PF00380">
    <property type="entry name" value="Ribosomal_S9"/>
    <property type="match status" value="1"/>
</dbReference>
<dbReference type="SUPFAM" id="SSF54211">
    <property type="entry name" value="Ribosomal protein S5 domain 2-like"/>
    <property type="match status" value="1"/>
</dbReference>
<dbReference type="PROSITE" id="PS00360">
    <property type="entry name" value="RIBOSOMAL_S9"/>
    <property type="match status" value="1"/>
</dbReference>
<organism>
    <name type="scientific">Streptococcus equi subsp. zooepidemicus (strain H70)</name>
    <dbReference type="NCBI Taxonomy" id="553483"/>
    <lineage>
        <taxon>Bacteria</taxon>
        <taxon>Bacillati</taxon>
        <taxon>Bacillota</taxon>
        <taxon>Bacilli</taxon>
        <taxon>Lactobacillales</taxon>
        <taxon>Streptococcaceae</taxon>
        <taxon>Streptococcus</taxon>
    </lineage>
</organism>
<feature type="chain" id="PRO_1000211845" description="Small ribosomal subunit protein uS9">
    <location>
        <begin position="1"/>
        <end position="130"/>
    </location>
</feature>
<accession>C0MFN0</accession>
<keyword id="KW-0687">Ribonucleoprotein</keyword>
<keyword id="KW-0689">Ribosomal protein</keyword>
<name>RS9_STRS7</name>